<feature type="chain" id="PRO_0000225783" description="Homogentisate 1,2-dioxygenase">
    <location>
        <begin position="1"/>
        <end position="432"/>
    </location>
</feature>
<feature type="active site" description="Proton acceptor" evidence="1">
    <location>
        <position position="286"/>
    </location>
</feature>
<feature type="binding site" evidence="1">
    <location>
        <position position="329"/>
    </location>
    <ligand>
        <name>Fe cation</name>
        <dbReference type="ChEBI" id="CHEBI:24875"/>
    </ligand>
</feature>
<feature type="binding site" evidence="1">
    <location>
        <position position="335"/>
    </location>
    <ligand>
        <name>Fe cation</name>
        <dbReference type="ChEBI" id="CHEBI:24875"/>
    </ligand>
</feature>
<feature type="binding site" evidence="1">
    <location>
        <position position="344"/>
    </location>
    <ligand>
        <name>homogentisate</name>
        <dbReference type="ChEBI" id="CHEBI:16169"/>
    </ligand>
</feature>
<feature type="binding site" evidence="1">
    <location>
        <position position="365"/>
    </location>
    <ligand>
        <name>Fe cation</name>
        <dbReference type="ChEBI" id="CHEBI:24875"/>
    </ligand>
</feature>
<feature type="binding site" evidence="1">
    <location>
        <position position="365"/>
    </location>
    <ligand>
        <name>homogentisate</name>
        <dbReference type="ChEBI" id="CHEBI:16169"/>
    </ligand>
</feature>
<sequence length="432" mass="48039">MSLQYQTGFGNACATEALPGALPAGRNSPQICPYGLYAEQLSGTAFTAPRAENRRSWLYRIRPGVQHLPFAPFAGAQRWLSDFGRQPVTPNQLRWSPLPMPDAPTDFIDGMHTWGGNGGPEEQSGVGIHLYAANRSMQGRFFYNADGEMLIVPQQGRLRLATELGLIDIEPYEIAVVPRGVRLRVELLDDVARGYMLENFGTAMRLPELGPIGSNCLANARDFQIPVAWYEDVEGDFELIAKFTGGFWRAPIAHSPLNVVAWHGTHAPYKYDLRNFNTVGSISYDHPDPSIFTVLTSPSDTPGTANMDFAIFPPRILAMENTFRPPWFHRNIASEFMGLIHGVYDAKAEGFAPGGASLHNCMSGHGPDADTFEKASHADTSQAHYIRDTMAFMFETRRVIRPTAQALASPQRQDDYYQCWQGLQKHFDPEQA</sequence>
<protein>
    <recommendedName>
        <fullName evidence="1">Homogentisate 1,2-dioxygenase</fullName>
        <shortName evidence="1">HGDO</shortName>
        <ecNumber evidence="1">1.13.11.5</ecNumber>
    </recommendedName>
    <alternativeName>
        <fullName evidence="1">Homogentisate oxygenase</fullName>
    </alternativeName>
    <alternativeName>
        <fullName evidence="1">Homogentisic acid oxidase</fullName>
    </alternativeName>
    <alternativeName>
        <fullName evidence="1">Homogentisicase</fullName>
    </alternativeName>
</protein>
<dbReference type="EC" id="1.13.11.5" evidence="1"/>
<dbReference type="EMBL" id="BX640425">
    <property type="protein sequence ID" value="CAE40216.1"/>
    <property type="molecule type" value="Genomic_DNA"/>
</dbReference>
<dbReference type="RefSeq" id="WP_010925976.1">
    <property type="nucleotide sequence ID" value="NC_002928.3"/>
</dbReference>
<dbReference type="SMR" id="Q7W189"/>
<dbReference type="GeneID" id="93202557"/>
<dbReference type="KEGG" id="bpa:BPP0807"/>
<dbReference type="HOGENOM" id="CLU_027174_0_0_4"/>
<dbReference type="UniPathway" id="UPA00139">
    <property type="reaction ID" value="UER00339"/>
</dbReference>
<dbReference type="Proteomes" id="UP000001421">
    <property type="component" value="Chromosome"/>
</dbReference>
<dbReference type="GO" id="GO:0005737">
    <property type="term" value="C:cytoplasm"/>
    <property type="evidence" value="ECO:0007669"/>
    <property type="project" value="TreeGrafter"/>
</dbReference>
<dbReference type="GO" id="GO:0004411">
    <property type="term" value="F:homogentisate 1,2-dioxygenase activity"/>
    <property type="evidence" value="ECO:0007669"/>
    <property type="project" value="UniProtKB-UniRule"/>
</dbReference>
<dbReference type="GO" id="GO:0005506">
    <property type="term" value="F:iron ion binding"/>
    <property type="evidence" value="ECO:0007669"/>
    <property type="project" value="UniProtKB-UniRule"/>
</dbReference>
<dbReference type="GO" id="GO:0006559">
    <property type="term" value="P:L-phenylalanine catabolic process"/>
    <property type="evidence" value="ECO:0007669"/>
    <property type="project" value="UniProtKB-UniRule"/>
</dbReference>
<dbReference type="GO" id="GO:0006572">
    <property type="term" value="P:tyrosine catabolic process"/>
    <property type="evidence" value="ECO:0007669"/>
    <property type="project" value="UniProtKB-UniRule"/>
</dbReference>
<dbReference type="CDD" id="cd07000">
    <property type="entry name" value="cupin_HGO_N"/>
    <property type="match status" value="1"/>
</dbReference>
<dbReference type="FunFam" id="2.60.120.10:FF:000034">
    <property type="entry name" value="Homogentisate 1,2-dioxygenase"/>
    <property type="match status" value="1"/>
</dbReference>
<dbReference type="Gene3D" id="2.60.120.10">
    <property type="entry name" value="Jelly Rolls"/>
    <property type="match status" value="1"/>
</dbReference>
<dbReference type="HAMAP" id="MF_00334">
    <property type="entry name" value="Homogentis_dioxygen"/>
    <property type="match status" value="1"/>
</dbReference>
<dbReference type="InterPro" id="IPR046451">
    <property type="entry name" value="HgmA_C"/>
</dbReference>
<dbReference type="InterPro" id="IPR046452">
    <property type="entry name" value="HgmA_N"/>
</dbReference>
<dbReference type="InterPro" id="IPR005708">
    <property type="entry name" value="Homogentis_dOase"/>
</dbReference>
<dbReference type="InterPro" id="IPR022950">
    <property type="entry name" value="Homogentis_dOase_bac"/>
</dbReference>
<dbReference type="InterPro" id="IPR014710">
    <property type="entry name" value="RmlC-like_jellyroll"/>
</dbReference>
<dbReference type="InterPro" id="IPR011051">
    <property type="entry name" value="RmlC_Cupin_sf"/>
</dbReference>
<dbReference type="NCBIfam" id="TIGR01015">
    <property type="entry name" value="hmgA"/>
    <property type="match status" value="1"/>
</dbReference>
<dbReference type="PANTHER" id="PTHR11056">
    <property type="entry name" value="HOMOGENTISATE 1,2-DIOXYGENASE"/>
    <property type="match status" value="1"/>
</dbReference>
<dbReference type="PANTHER" id="PTHR11056:SF0">
    <property type="entry name" value="HOMOGENTISATE 1,2-DIOXYGENASE"/>
    <property type="match status" value="1"/>
</dbReference>
<dbReference type="Pfam" id="PF04209">
    <property type="entry name" value="HgmA_C"/>
    <property type="match status" value="1"/>
</dbReference>
<dbReference type="Pfam" id="PF20510">
    <property type="entry name" value="HgmA_N"/>
    <property type="match status" value="1"/>
</dbReference>
<dbReference type="SUPFAM" id="SSF51182">
    <property type="entry name" value="RmlC-like cupins"/>
    <property type="match status" value="1"/>
</dbReference>
<reference key="1">
    <citation type="journal article" date="2003" name="Nat. Genet.">
        <title>Comparative analysis of the genome sequences of Bordetella pertussis, Bordetella parapertussis and Bordetella bronchiseptica.</title>
        <authorList>
            <person name="Parkhill J."/>
            <person name="Sebaihia M."/>
            <person name="Preston A."/>
            <person name="Murphy L.D."/>
            <person name="Thomson N.R."/>
            <person name="Harris D.E."/>
            <person name="Holden M.T.G."/>
            <person name="Churcher C.M."/>
            <person name="Bentley S.D."/>
            <person name="Mungall K.L."/>
            <person name="Cerdeno-Tarraga A.-M."/>
            <person name="Temple L."/>
            <person name="James K.D."/>
            <person name="Harris B."/>
            <person name="Quail M.A."/>
            <person name="Achtman M."/>
            <person name="Atkin R."/>
            <person name="Baker S."/>
            <person name="Basham D."/>
            <person name="Bason N."/>
            <person name="Cherevach I."/>
            <person name="Chillingworth T."/>
            <person name="Collins M."/>
            <person name="Cronin A."/>
            <person name="Davis P."/>
            <person name="Doggett J."/>
            <person name="Feltwell T."/>
            <person name="Goble A."/>
            <person name="Hamlin N."/>
            <person name="Hauser H."/>
            <person name="Holroyd S."/>
            <person name="Jagels K."/>
            <person name="Leather S."/>
            <person name="Moule S."/>
            <person name="Norberczak H."/>
            <person name="O'Neil S."/>
            <person name="Ormond D."/>
            <person name="Price C."/>
            <person name="Rabbinowitsch E."/>
            <person name="Rutter S."/>
            <person name="Sanders M."/>
            <person name="Saunders D."/>
            <person name="Seeger K."/>
            <person name="Sharp S."/>
            <person name="Simmonds M."/>
            <person name="Skelton J."/>
            <person name="Squares R."/>
            <person name="Squares S."/>
            <person name="Stevens K."/>
            <person name="Unwin L."/>
            <person name="Whitehead S."/>
            <person name="Barrell B.G."/>
            <person name="Maskell D.J."/>
        </authorList>
    </citation>
    <scope>NUCLEOTIDE SEQUENCE [LARGE SCALE GENOMIC DNA]</scope>
    <source>
        <strain>12822 / ATCC BAA-587 / NCTC 13253</strain>
    </source>
</reference>
<comment type="function">
    <text evidence="1">Involved in the catabolism of homogentisate (2,5-dihydroxyphenylacetate or 2,5-OH-PhAc), a central intermediate in the degradation of phenylalanine and tyrosine. Catalyzes the oxidative ring cleavage of the aromatic ring of homogentisate to yield maleylacetoacetate.</text>
</comment>
<comment type="catalytic activity">
    <reaction evidence="1">
        <text>homogentisate + O2 = 4-maleylacetoacetate + H(+)</text>
        <dbReference type="Rhea" id="RHEA:15449"/>
        <dbReference type="ChEBI" id="CHEBI:15378"/>
        <dbReference type="ChEBI" id="CHEBI:15379"/>
        <dbReference type="ChEBI" id="CHEBI:16169"/>
        <dbReference type="ChEBI" id="CHEBI:17105"/>
        <dbReference type="EC" id="1.13.11.5"/>
    </reaction>
</comment>
<comment type="cofactor">
    <cofactor evidence="1">
        <name>Fe cation</name>
        <dbReference type="ChEBI" id="CHEBI:24875"/>
    </cofactor>
</comment>
<comment type="pathway">
    <text evidence="1">Amino-acid degradation; L-phenylalanine degradation; acetoacetate and fumarate from L-phenylalanine: step 4/6.</text>
</comment>
<comment type="subunit">
    <text evidence="1">Hexamer; dimer of trimers.</text>
</comment>
<comment type="similarity">
    <text evidence="1">Belongs to the homogentisate dioxygenase family.</text>
</comment>
<accession>Q7W189</accession>
<keyword id="KW-0223">Dioxygenase</keyword>
<keyword id="KW-0408">Iron</keyword>
<keyword id="KW-0479">Metal-binding</keyword>
<keyword id="KW-0560">Oxidoreductase</keyword>
<keyword id="KW-0585">Phenylalanine catabolism</keyword>
<keyword id="KW-0828">Tyrosine catabolism</keyword>
<organism>
    <name type="scientific">Bordetella parapertussis (strain 12822 / ATCC BAA-587 / NCTC 13253)</name>
    <dbReference type="NCBI Taxonomy" id="257311"/>
    <lineage>
        <taxon>Bacteria</taxon>
        <taxon>Pseudomonadati</taxon>
        <taxon>Pseudomonadota</taxon>
        <taxon>Betaproteobacteria</taxon>
        <taxon>Burkholderiales</taxon>
        <taxon>Alcaligenaceae</taxon>
        <taxon>Bordetella</taxon>
    </lineage>
</organism>
<proteinExistence type="inferred from homology"/>
<name>HGD_BORPA</name>
<evidence type="ECO:0000255" key="1">
    <source>
        <dbReference type="HAMAP-Rule" id="MF_00334"/>
    </source>
</evidence>
<gene>
    <name evidence="1" type="primary">hmgA</name>
    <name type="ordered locus">BPP0807</name>
</gene>